<organism>
    <name type="scientific">Chlorocebus aethiops</name>
    <name type="common">Green monkey</name>
    <name type="synonym">Cercopithecus aethiops</name>
    <dbReference type="NCBI Taxonomy" id="9534"/>
    <lineage>
        <taxon>Eukaryota</taxon>
        <taxon>Metazoa</taxon>
        <taxon>Chordata</taxon>
        <taxon>Craniata</taxon>
        <taxon>Vertebrata</taxon>
        <taxon>Euteleostomi</taxon>
        <taxon>Mammalia</taxon>
        <taxon>Eutheria</taxon>
        <taxon>Euarchontoglires</taxon>
        <taxon>Primates</taxon>
        <taxon>Haplorrhini</taxon>
        <taxon>Catarrhini</taxon>
        <taxon>Cercopithecidae</taxon>
        <taxon>Cercopithecinae</taxon>
        <taxon>Chlorocebus</taxon>
    </lineage>
</organism>
<reference key="1">
    <citation type="journal article" date="1998" name="Mol. Cell. Biol.">
        <title>Hepatitis B virus X-associated protein 2 is a subunit of the unliganded aryl hydrocarbon receptor core complex and exhibits transcriptional enhancer activity.</title>
        <authorList>
            <person name="Meyer B.K."/>
            <person name="Pray-Grant M.G."/>
            <person name="Vanden Heuvel J.P."/>
            <person name="Perdew G.H."/>
        </authorList>
    </citation>
    <scope>NUCLEOTIDE SEQUENCE [MRNA]</scope>
</reference>
<comment type="function">
    <text>May play a positive role in AHR-mediated (aromatic hydrocarbon receptor) signaling, possibly by influencing its receptivity for ligand and/or its nuclear targeting.</text>
</comment>
<comment type="function">
    <text>Cellular negative regulator of the hepatitis B virus (HBV) X protein.</text>
</comment>
<comment type="subunit">
    <text>Interacts with RET in the pituitary gland; this interaction prevents the formation of the AIP-survivin complex.</text>
</comment>
<comment type="subcellular location">
    <subcellularLocation>
        <location>Cytoplasm</location>
    </subcellularLocation>
</comment>
<name>AIP_CHLAE</name>
<keyword id="KW-0963">Cytoplasm</keyword>
<keyword id="KW-0597">Phosphoprotein</keyword>
<keyword id="KW-0677">Repeat</keyword>
<keyword id="KW-0802">TPR repeat</keyword>
<gene>
    <name type="primary">AIP</name>
    <name type="synonym">XAP2</name>
</gene>
<sequence length="330" mass="37531">MADIIARLREDGIQKRVIQEGRGELPDFQDGTKATFHYRTLHSDNEGTVLDDSRVRGKPMELIIGKKFKLPVWETIVCTMREGEIAQFLCDIKHVVLYPLVAKSLGNIAVGKDPLEGQRHCCGVAQMHEHSSLGHADLDALQQNPQPLVFHMEMLKVESPGTYQQDPWAMTDEEKAKAVPLIHQEGNRLYREGHVKEAAAKYYDAIACLKNLQMKEQPGSPEWIQLDQQITPLLLNYCQCKLVAEEYYEVLDHCSSILNKYDDNVKAYFKRGKAHAAVWNAQEAQADFAKVLELDPALAPVVSRELRALEARIRQKDEEDKARFRGIFSH</sequence>
<protein>
    <recommendedName>
        <fullName>AH receptor-interacting protein</fullName>
        <shortName>AIP</shortName>
    </recommendedName>
    <alternativeName>
        <fullName>Aryl-hydrocarbon receptor-interacting protein</fullName>
    </alternativeName>
    <alternativeName>
        <fullName>HBV X-associated protein 2</fullName>
        <shortName>XAP-2</shortName>
    </alternativeName>
    <alternativeName>
        <fullName>p38</fullName>
    </alternativeName>
</protein>
<evidence type="ECO:0000250" key="1">
    <source>
        <dbReference type="UniProtKB" id="O00170"/>
    </source>
</evidence>
<evidence type="ECO:0000255" key="2"/>
<evidence type="ECO:0000255" key="3">
    <source>
        <dbReference type="PROSITE-ProRule" id="PRU00277"/>
    </source>
</evidence>
<evidence type="ECO:0000255" key="4">
    <source>
        <dbReference type="PROSITE-ProRule" id="PRU00339"/>
    </source>
</evidence>
<dbReference type="EMBL" id="AF090949">
    <property type="protein sequence ID" value="AAD13759.1"/>
    <property type="molecule type" value="mRNA"/>
</dbReference>
<dbReference type="BMRB" id="O97628"/>
<dbReference type="SMR" id="O97628"/>
<dbReference type="GO" id="GO:0005737">
    <property type="term" value="C:cytoplasm"/>
    <property type="evidence" value="ECO:0007669"/>
    <property type="project" value="UniProtKB-SubCell"/>
</dbReference>
<dbReference type="GO" id="GO:0003755">
    <property type="term" value="F:peptidyl-prolyl cis-trans isomerase activity"/>
    <property type="evidence" value="ECO:0007669"/>
    <property type="project" value="InterPro"/>
</dbReference>
<dbReference type="FunFam" id="1.25.40.10:FF:000052">
    <property type="entry name" value="Aryl-hydrocarbon-interacting protein-like 1"/>
    <property type="match status" value="1"/>
</dbReference>
<dbReference type="FunFam" id="3.10.50.40:FF:000018">
    <property type="entry name" value="Aryl-hydrocarbon-interacting protein-like 1"/>
    <property type="match status" value="1"/>
</dbReference>
<dbReference type="Gene3D" id="3.10.50.40">
    <property type="match status" value="1"/>
</dbReference>
<dbReference type="Gene3D" id="1.25.40.10">
    <property type="entry name" value="Tetratricopeptide repeat domain"/>
    <property type="match status" value="1"/>
</dbReference>
<dbReference type="InterPro" id="IPR039663">
    <property type="entry name" value="AIP/AIPL1/TTC9"/>
</dbReference>
<dbReference type="InterPro" id="IPR056277">
    <property type="entry name" value="PPIase_AIP"/>
</dbReference>
<dbReference type="InterPro" id="IPR046357">
    <property type="entry name" value="PPIase_dom_sf"/>
</dbReference>
<dbReference type="InterPro" id="IPR001179">
    <property type="entry name" value="PPIase_FKBP_dom"/>
</dbReference>
<dbReference type="InterPro" id="IPR011990">
    <property type="entry name" value="TPR-like_helical_dom_sf"/>
</dbReference>
<dbReference type="InterPro" id="IPR019734">
    <property type="entry name" value="TPR_rpt"/>
</dbReference>
<dbReference type="PANTHER" id="PTHR11242:SF3">
    <property type="entry name" value="AH RECEPTOR-INTERACTING PROTEIN"/>
    <property type="match status" value="1"/>
</dbReference>
<dbReference type="PANTHER" id="PTHR11242">
    <property type="entry name" value="ARYL HYDROCARBON RECEPTOR INTERACTING PROTEIN RELATED"/>
    <property type="match status" value="1"/>
</dbReference>
<dbReference type="Pfam" id="PF23322">
    <property type="entry name" value="PPIase_AIP"/>
    <property type="match status" value="1"/>
</dbReference>
<dbReference type="SUPFAM" id="SSF54534">
    <property type="entry name" value="FKBP-like"/>
    <property type="match status" value="1"/>
</dbReference>
<dbReference type="SUPFAM" id="SSF48452">
    <property type="entry name" value="TPR-like"/>
    <property type="match status" value="1"/>
</dbReference>
<dbReference type="PROSITE" id="PS50059">
    <property type="entry name" value="FKBP_PPIASE"/>
    <property type="match status" value="1"/>
</dbReference>
<dbReference type="PROSITE" id="PS50005">
    <property type="entry name" value="TPR"/>
    <property type="match status" value="1"/>
</dbReference>
<dbReference type="PROSITE" id="PS50293">
    <property type="entry name" value="TPR_REGION"/>
    <property type="match status" value="1"/>
</dbReference>
<proteinExistence type="evidence at transcript level"/>
<feature type="chain" id="PRO_0000075338" description="AH receptor-interacting protein">
    <location>
        <begin position="1"/>
        <end position="330"/>
    </location>
</feature>
<feature type="domain" description="PPIase FKBP-type" evidence="3">
    <location>
        <begin position="54"/>
        <end position="146"/>
    </location>
</feature>
<feature type="repeat" description="TPR 1" evidence="2">
    <location>
        <begin position="179"/>
        <end position="212"/>
    </location>
</feature>
<feature type="repeat" description="TPR 2" evidence="1">
    <location>
        <begin position="231"/>
        <end position="264"/>
    </location>
</feature>
<feature type="repeat" description="TPR 3" evidence="2 4">
    <location>
        <begin position="265"/>
        <end position="298"/>
    </location>
</feature>
<feature type="modified residue" description="Phosphoserine" evidence="1">
    <location>
        <position position="43"/>
    </location>
</feature>
<accession>O97628</accession>